<evidence type="ECO:0000255" key="1">
    <source>
        <dbReference type="HAMAP-Rule" id="MF_00022"/>
    </source>
</evidence>
<reference key="1">
    <citation type="journal article" date="2004" name="Nat. Biotechnol.">
        <title>Complete genome sequence of the metabolically versatile photosynthetic bacterium Rhodopseudomonas palustris.</title>
        <authorList>
            <person name="Larimer F.W."/>
            <person name="Chain P."/>
            <person name="Hauser L."/>
            <person name="Lamerdin J.E."/>
            <person name="Malfatti S."/>
            <person name="Do L."/>
            <person name="Land M.L."/>
            <person name="Pelletier D.A."/>
            <person name="Beatty J.T."/>
            <person name="Lang A.S."/>
            <person name="Tabita F.R."/>
            <person name="Gibson J.L."/>
            <person name="Hanson T.E."/>
            <person name="Bobst C."/>
            <person name="Torres y Torres J.L."/>
            <person name="Peres C."/>
            <person name="Harrison F.H."/>
            <person name="Gibson J."/>
            <person name="Harwood C.S."/>
        </authorList>
    </citation>
    <scope>NUCLEOTIDE SEQUENCE [LARGE SCALE GENOMIC DNA]</scope>
    <source>
        <strain>ATCC BAA-98 / CGA009</strain>
    </source>
</reference>
<dbReference type="EC" id="6.1.1.17" evidence="1"/>
<dbReference type="EMBL" id="BX572602">
    <property type="protein sequence ID" value="CAE28347.1"/>
    <property type="molecule type" value="Genomic_DNA"/>
</dbReference>
<dbReference type="RefSeq" id="WP_011158455.1">
    <property type="nucleotide sequence ID" value="NZ_CP116810.1"/>
</dbReference>
<dbReference type="SMR" id="Q6N5R5"/>
<dbReference type="STRING" id="258594.RPA2906"/>
<dbReference type="GeneID" id="66893988"/>
<dbReference type="eggNOG" id="COG0008">
    <property type="taxonomic scope" value="Bacteria"/>
</dbReference>
<dbReference type="HOGENOM" id="CLU_015768_6_3_5"/>
<dbReference type="PhylomeDB" id="Q6N5R5"/>
<dbReference type="GO" id="GO:0005829">
    <property type="term" value="C:cytosol"/>
    <property type="evidence" value="ECO:0007669"/>
    <property type="project" value="TreeGrafter"/>
</dbReference>
<dbReference type="GO" id="GO:0005524">
    <property type="term" value="F:ATP binding"/>
    <property type="evidence" value="ECO:0007669"/>
    <property type="project" value="UniProtKB-UniRule"/>
</dbReference>
<dbReference type="GO" id="GO:0004818">
    <property type="term" value="F:glutamate-tRNA ligase activity"/>
    <property type="evidence" value="ECO:0007669"/>
    <property type="project" value="UniProtKB-UniRule"/>
</dbReference>
<dbReference type="GO" id="GO:0000049">
    <property type="term" value="F:tRNA binding"/>
    <property type="evidence" value="ECO:0007669"/>
    <property type="project" value="InterPro"/>
</dbReference>
<dbReference type="GO" id="GO:0008270">
    <property type="term" value="F:zinc ion binding"/>
    <property type="evidence" value="ECO:0007669"/>
    <property type="project" value="InterPro"/>
</dbReference>
<dbReference type="GO" id="GO:0006424">
    <property type="term" value="P:glutamyl-tRNA aminoacylation"/>
    <property type="evidence" value="ECO:0007669"/>
    <property type="project" value="UniProtKB-UniRule"/>
</dbReference>
<dbReference type="CDD" id="cd00808">
    <property type="entry name" value="GluRS_core"/>
    <property type="match status" value="1"/>
</dbReference>
<dbReference type="FunFam" id="3.40.50.620:FF:000007">
    <property type="entry name" value="Glutamate--tRNA ligase"/>
    <property type="match status" value="1"/>
</dbReference>
<dbReference type="Gene3D" id="1.10.10.350">
    <property type="match status" value="1"/>
</dbReference>
<dbReference type="Gene3D" id="3.40.50.620">
    <property type="entry name" value="HUPs"/>
    <property type="match status" value="1"/>
</dbReference>
<dbReference type="HAMAP" id="MF_00022">
    <property type="entry name" value="Glu_tRNA_synth_type1"/>
    <property type="match status" value="1"/>
</dbReference>
<dbReference type="InterPro" id="IPR045462">
    <property type="entry name" value="aa-tRNA-synth_I_cd-bd"/>
</dbReference>
<dbReference type="InterPro" id="IPR020751">
    <property type="entry name" value="aa-tRNA-synth_I_codon-bd_sub2"/>
</dbReference>
<dbReference type="InterPro" id="IPR001412">
    <property type="entry name" value="aa-tRNA-synth_I_CS"/>
</dbReference>
<dbReference type="InterPro" id="IPR008925">
    <property type="entry name" value="aa_tRNA-synth_I_cd-bd_sf"/>
</dbReference>
<dbReference type="InterPro" id="IPR004527">
    <property type="entry name" value="Glu-tRNA-ligase_bac/mito"/>
</dbReference>
<dbReference type="InterPro" id="IPR000924">
    <property type="entry name" value="Glu/Gln-tRNA-synth"/>
</dbReference>
<dbReference type="InterPro" id="IPR020058">
    <property type="entry name" value="Glu/Gln-tRNA-synth_Ib_cat-dom"/>
</dbReference>
<dbReference type="InterPro" id="IPR049940">
    <property type="entry name" value="GluQ/Sye"/>
</dbReference>
<dbReference type="InterPro" id="IPR033910">
    <property type="entry name" value="GluRS_core"/>
</dbReference>
<dbReference type="InterPro" id="IPR014729">
    <property type="entry name" value="Rossmann-like_a/b/a_fold"/>
</dbReference>
<dbReference type="NCBIfam" id="TIGR00464">
    <property type="entry name" value="gltX_bact"/>
    <property type="match status" value="1"/>
</dbReference>
<dbReference type="PANTHER" id="PTHR43311">
    <property type="entry name" value="GLUTAMATE--TRNA LIGASE"/>
    <property type="match status" value="1"/>
</dbReference>
<dbReference type="PANTHER" id="PTHR43311:SF2">
    <property type="entry name" value="GLUTAMATE--TRNA LIGASE, MITOCHONDRIAL-RELATED"/>
    <property type="match status" value="1"/>
</dbReference>
<dbReference type="Pfam" id="PF19269">
    <property type="entry name" value="Anticodon_2"/>
    <property type="match status" value="1"/>
</dbReference>
<dbReference type="Pfam" id="PF00749">
    <property type="entry name" value="tRNA-synt_1c"/>
    <property type="match status" value="1"/>
</dbReference>
<dbReference type="PRINTS" id="PR00987">
    <property type="entry name" value="TRNASYNTHGLU"/>
</dbReference>
<dbReference type="SUPFAM" id="SSF48163">
    <property type="entry name" value="An anticodon-binding domain of class I aminoacyl-tRNA synthetases"/>
    <property type="match status" value="1"/>
</dbReference>
<dbReference type="SUPFAM" id="SSF52374">
    <property type="entry name" value="Nucleotidylyl transferase"/>
    <property type="match status" value="1"/>
</dbReference>
<dbReference type="PROSITE" id="PS00178">
    <property type="entry name" value="AA_TRNA_LIGASE_I"/>
    <property type="match status" value="1"/>
</dbReference>
<comment type="function">
    <text evidence="1">Catalyzes the attachment of glutamate to tRNA(Glu) in a two-step reaction: glutamate is first activated by ATP to form Glu-AMP and then transferred to the acceptor end of tRNA(Glu).</text>
</comment>
<comment type="catalytic activity">
    <reaction evidence="1">
        <text>tRNA(Glu) + L-glutamate + ATP = L-glutamyl-tRNA(Glu) + AMP + diphosphate</text>
        <dbReference type="Rhea" id="RHEA:23540"/>
        <dbReference type="Rhea" id="RHEA-COMP:9663"/>
        <dbReference type="Rhea" id="RHEA-COMP:9680"/>
        <dbReference type="ChEBI" id="CHEBI:29985"/>
        <dbReference type="ChEBI" id="CHEBI:30616"/>
        <dbReference type="ChEBI" id="CHEBI:33019"/>
        <dbReference type="ChEBI" id="CHEBI:78442"/>
        <dbReference type="ChEBI" id="CHEBI:78520"/>
        <dbReference type="ChEBI" id="CHEBI:456215"/>
        <dbReference type="EC" id="6.1.1.17"/>
    </reaction>
</comment>
<comment type="subunit">
    <text evidence="1">Monomer.</text>
</comment>
<comment type="subcellular location">
    <subcellularLocation>
        <location evidence="1">Cytoplasm</location>
    </subcellularLocation>
</comment>
<comment type="similarity">
    <text evidence="1">Belongs to the class-I aminoacyl-tRNA synthetase family. Glutamate--tRNA ligase type 1 subfamily.</text>
</comment>
<organism>
    <name type="scientific">Rhodopseudomonas palustris (strain ATCC BAA-98 / CGA009)</name>
    <dbReference type="NCBI Taxonomy" id="258594"/>
    <lineage>
        <taxon>Bacteria</taxon>
        <taxon>Pseudomonadati</taxon>
        <taxon>Pseudomonadota</taxon>
        <taxon>Alphaproteobacteria</taxon>
        <taxon>Hyphomicrobiales</taxon>
        <taxon>Nitrobacteraceae</taxon>
        <taxon>Rhodopseudomonas</taxon>
    </lineage>
</organism>
<gene>
    <name evidence="1" type="primary">gltX</name>
    <name type="ordered locus">RPA2906</name>
</gene>
<name>SYE_RHOPA</name>
<feature type="chain" id="PRO_0000119636" description="Glutamate--tRNA ligase">
    <location>
        <begin position="1"/>
        <end position="473"/>
    </location>
</feature>
<feature type="short sequence motif" description="'HIGH' region" evidence="1">
    <location>
        <begin position="11"/>
        <end position="21"/>
    </location>
</feature>
<feature type="short sequence motif" description="'KMSKS' region" evidence="1">
    <location>
        <begin position="240"/>
        <end position="244"/>
    </location>
</feature>
<feature type="binding site" evidence="1">
    <location>
        <position position="243"/>
    </location>
    <ligand>
        <name>ATP</name>
        <dbReference type="ChEBI" id="CHEBI:30616"/>
    </ligand>
</feature>
<accession>Q6N5R5</accession>
<sequence length="473" mass="52179">MTRPVVTRFAPSPTGFLHIGGGRTALFNWLYARKHGGTMLLRIEDTDRQRSTQEAIDAILDGLKWLGIDWDGDTVYQFARAARHREVAEQLLAAGKAYRCYATAEELTAMRDKARAEGRAKLYDGSWRDRDPSEAPAGVKPTIRLKAPLTGETVIEDQVQGRVAWQNENLDDLVLLRGDGTPTYMLAVVVDDHDMGVTHVIRGDDHLINAARQKQIYDAMEWELPVMAHIPLIHGPDGSKLSKRHGALGVDAYRAMGYLPAALRNYLVRLGWSHGDQEIFTTQEMIDAFDLPAIGRSAARFDFAKLESLNGHYIRQSDDHSLVTLLEDLLKYIPQGPAIATKFDDSIRAKLTQAMPGLKERAKTLIELLDNAGFIFADRPLALDPKAQAVLTPETRQLIGRLRAALEDVSPWTAATTEAAMRAFAEQAGLKLGAVAQPLRVALTGRTTSPGIFDVLAVLGRDECLSRLADQSA</sequence>
<protein>
    <recommendedName>
        <fullName evidence="1">Glutamate--tRNA ligase</fullName>
        <ecNumber evidence="1">6.1.1.17</ecNumber>
    </recommendedName>
    <alternativeName>
        <fullName evidence="1">Glutamyl-tRNA synthetase</fullName>
        <shortName evidence="1">GluRS</shortName>
    </alternativeName>
</protein>
<proteinExistence type="inferred from homology"/>
<keyword id="KW-0030">Aminoacyl-tRNA synthetase</keyword>
<keyword id="KW-0067">ATP-binding</keyword>
<keyword id="KW-0963">Cytoplasm</keyword>
<keyword id="KW-0436">Ligase</keyword>
<keyword id="KW-0547">Nucleotide-binding</keyword>
<keyword id="KW-0648">Protein biosynthesis</keyword>